<protein>
    <recommendedName>
        <fullName>Disintegrin and metalloproteinase domain-containing protein B</fullName>
        <shortName>ADAM B</shortName>
        <ecNumber>3.4.24.-</ecNumber>
    </recommendedName>
</protein>
<sequence length="796" mass="86526">MKALSCLLAVIATAGSLFQHVDARSHARDRLNNISRVERPVIHTPSHRVHAHSHFDLTFDLYPRSSRIKLQLEPNHDVLSHDARVAFLDGEGNVDRMERIERRDHRVFKGWAWVQRKSGSWERVGWARVMMQRDGEDPLFEGVFTVMHDHHQIIPKTKYVHKRHPHDPPLDATPGEYMLLFRGSDIRTQTHDTVERSITSSPSCDADTLAYGTQSDFMFPPLPQENNTNLWGSLMTSIGRRQNSDTVGTVPGSQNLRDTIGNTDGCPNTRRVALIGVVADCTYTSTFASEMDAKTDIISVVNAASVVYEHTFNISLTLGEVNILPKNCPATASSATPFNQMCGERVGDESFTLADRLNTFSAWRGKKSDDFAFWTLMTDCTTENQVGLAWAAQLCVKGVQGDSNTRNASSQAVSGANVVSKTDNTWQVFAHEAGHIFGAVHDCDSALCQDPSNPDNSRCCPSTATTCDAGGKFMMNPTSGSQITAFSPCSVGQICSRMAKHSILTNCLTTNRGVDTISGQQCGNGIVEDGEDCDCGGDESCKGNKCCDPKTCKYTSGSQCDDANEECCRDCKFASSSTICRLSSGPCDPEEKCTGNSGDCPRDTHSKNGETCGTNLQCASGQCTSRDLQCQMHLGSQVAGSRTVAFDSYGCQVACKDPYRPDVRYEGSLTFLDGTPCGGGGTCENGQCTGSTFGNEVSDWVSRHKPIVIGVAVGVGCLLLLAILSCICGRSKKRRPRNRKMAPINMRPMPPVYNGWTGPPPNAESPGGHPQYNHVPPPINAPPPAYPGRMPSTRYA</sequence>
<keyword id="KW-1015">Disulfide bond</keyword>
<keyword id="KW-0325">Glycoprotein</keyword>
<keyword id="KW-0378">Hydrolase</keyword>
<keyword id="KW-0472">Membrane</keyword>
<keyword id="KW-0479">Metal-binding</keyword>
<keyword id="KW-0482">Metalloprotease</keyword>
<keyword id="KW-0645">Protease</keyword>
<keyword id="KW-1185">Reference proteome</keyword>
<keyword id="KW-0732">Signal</keyword>
<keyword id="KW-0812">Transmembrane</keyword>
<keyword id="KW-1133">Transmembrane helix</keyword>
<keyword id="KW-0862">Zinc</keyword>
<reference key="1">
    <citation type="journal article" date="2012" name="MBio">
        <title>Comparative genome analysis of Trichophyton rubrum and related dermatophytes reveals candidate genes involved in infection.</title>
        <authorList>
            <person name="Martinez D.A."/>
            <person name="Oliver B.G."/>
            <person name="Graeser Y."/>
            <person name="Goldberg J.M."/>
            <person name="Li W."/>
            <person name="Martinez-Rossi N.M."/>
            <person name="Monod M."/>
            <person name="Shelest E."/>
            <person name="Barton R.C."/>
            <person name="Birch E."/>
            <person name="Brakhage A.A."/>
            <person name="Chen Z."/>
            <person name="Gurr S.J."/>
            <person name="Heiman D."/>
            <person name="Heitman J."/>
            <person name="Kosti I."/>
            <person name="Rossi A."/>
            <person name="Saif S."/>
            <person name="Samalova M."/>
            <person name="Saunders C.W."/>
            <person name="Shea T."/>
            <person name="Summerbell R.C."/>
            <person name="Xu J."/>
            <person name="Young S."/>
            <person name="Zeng Q."/>
            <person name="Birren B.W."/>
            <person name="Cuomo C.A."/>
            <person name="White T.C."/>
        </authorList>
    </citation>
    <scope>NUCLEOTIDE SEQUENCE [LARGE SCALE GENOMIC DNA]</scope>
    <source>
        <strain>ATCC MYA-4605 / CBS 113480</strain>
    </source>
</reference>
<feature type="signal peptide" evidence="2">
    <location>
        <begin position="1"/>
        <end position="23"/>
    </location>
</feature>
<feature type="chain" id="PRO_0000390773" description="Disintegrin and metalloproteinase domain-containing protein B">
    <location>
        <begin position="24"/>
        <end position="796"/>
    </location>
</feature>
<feature type="topological domain" description="Extracellular" evidence="2">
    <location>
        <begin position="24"/>
        <end position="706"/>
    </location>
</feature>
<feature type="transmembrane region" description="Helical" evidence="2">
    <location>
        <begin position="707"/>
        <end position="727"/>
    </location>
</feature>
<feature type="topological domain" description="Cytoplasmic" evidence="2">
    <location>
        <begin position="728"/>
        <end position="796"/>
    </location>
</feature>
<feature type="domain" description="Peptidase M12B" evidence="4">
    <location>
        <begin position="271"/>
        <end position="510"/>
    </location>
</feature>
<feature type="domain" description="Disintegrin" evidence="3">
    <location>
        <begin position="519"/>
        <end position="608"/>
    </location>
</feature>
<feature type="region of interest" description="Disordered" evidence="5">
    <location>
        <begin position="737"/>
        <end position="796"/>
    </location>
</feature>
<feature type="compositionally biased region" description="Pro residues" evidence="5">
    <location>
        <begin position="775"/>
        <end position="786"/>
    </location>
</feature>
<feature type="active site" evidence="4">
    <location>
        <position position="432"/>
    </location>
</feature>
<feature type="binding site" evidence="4">
    <location>
        <position position="431"/>
    </location>
    <ligand>
        <name>Zn(2+)</name>
        <dbReference type="ChEBI" id="CHEBI:29105"/>
        <note>catalytic</note>
    </ligand>
</feature>
<feature type="binding site" evidence="4">
    <location>
        <position position="435"/>
    </location>
    <ligand>
        <name>Zn(2+)</name>
        <dbReference type="ChEBI" id="CHEBI:29105"/>
        <note>catalytic</note>
    </ligand>
</feature>
<feature type="binding site" evidence="4">
    <location>
        <position position="441"/>
    </location>
    <ligand>
        <name>Zn(2+)</name>
        <dbReference type="ChEBI" id="CHEBI:29105"/>
        <note>catalytic</note>
    </ligand>
</feature>
<feature type="glycosylation site" description="N-linked (GlcNAc...) asparagine" evidence="2">
    <location>
        <position position="33"/>
    </location>
</feature>
<feature type="glycosylation site" description="N-linked (GlcNAc...) asparagine" evidence="2">
    <location>
        <position position="226"/>
    </location>
</feature>
<feature type="glycosylation site" description="N-linked (GlcNAc...) asparagine" evidence="2">
    <location>
        <position position="313"/>
    </location>
</feature>
<feature type="glycosylation site" description="N-linked (GlcNAc...) asparagine" evidence="2">
    <location>
        <position position="407"/>
    </location>
</feature>
<feature type="disulfide bond" evidence="1">
    <location>
        <begin position="395"/>
        <end position="495"/>
    </location>
</feature>
<feature type="disulfide bond" evidence="1">
    <location>
        <begin position="448"/>
        <end position="459"/>
    </location>
</feature>
<feature type="disulfide bond" evidence="1">
    <location>
        <begin position="580"/>
        <end position="600"/>
    </location>
</feature>
<evidence type="ECO:0000250" key="1"/>
<evidence type="ECO:0000255" key="2"/>
<evidence type="ECO:0000255" key="3">
    <source>
        <dbReference type="PROSITE-ProRule" id="PRU00068"/>
    </source>
</evidence>
<evidence type="ECO:0000255" key="4">
    <source>
        <dbReference type="PROSITE-ProRule" id="PRU00276"/>
    </source>
</evidence>
<evidence type="ECO:0000256" key="5">
    <source>
        <dbReference type="SAM" id="MobiDB-lite"/>
    </source>
</evidence>
<dbReference type="EC" id="3.4.24.-"/>
<dbReference type="EMBL" id="DS995706">
    <property type="protein sequence ID" value="EEQ33587.1"/>
    <property type="molecule type" value="Genomic_DNA"/>
</dbReference>
<dbReference type="RefSeq" id="XP_002844442.1">
    <property type="nucleotide sequence ID" value="XM_002844396.1"/>
</dbReference>
<dbReference type="SMR" id="C5FUK3"/>
<dbReference type="STRING" id="554155.C5FUK3"/>
<dbReference type="GlyCosmos" id="C5FUK3">
    <property type="glycosylation" value="4 sites, No reported glycans"/>
</dbReference>
<dbReference type="GeneID" id="9230883"/>
<dbReference type="VEuPathDB" id="FungiDB:MCYG_06406"/>
<dbReference type="eggNOG" id="KOG3607">
    <property type="taxonomic scope" value="Eukaryota"/>
</dbReference>
<dbReference type="HOGENOM" id="CLU_012383_1_0_1"/>
<dbReference type="OMA" id="YGLQQNF"/>
<dbReference type="OrthoDB" id="5951731at2759"/>
<dbReference type="Proteomes" id="UP000002035">
    <property type="component" value="Unassembled WGS sequence"/>
</dbReference>
<dbReference type="GO" id="GO:0016020">
    <property type="term" value="C:membrane"/>
    <property type="evidence" value="ECO:0007669"/>
    <property type="project" value="UniProtKB-SubCell"/>
</dbReference>
<dbReference type="GO" id="GO:0046872">
    <property type="term" value="F:metal ion binding"/>
    <property type="evidence" value="ECO:0007669"/>
    <property type="project" value="UniProtKB-KW"/>
</dbReference>
<dbReference type="GO" id="GO:0004222">
    <property type="term" value="F:metalloendopeptidase activity"/>
    <property type="evidence" value="ECO:0007669"/>
    <property type="project" value="InterPro"/>
</dbReference>
<dbReference type="GO" id="GO:0006508">
    <property type="term" value="P:proteolysis"/>
    <property type="evidence" value="ECO:0007669"/>
    <property type="project" value="UniProtKB-KW"/>
</dbReference>
<dbReference type="CDD" id="cd04271">
    <property type="entry name" value="ZnMc_ADAM_fungal"/>
    <property type="match status" value="1"/>
</dbReference>
<dbReference type="FunFam" id="4.10.70.10:FF:000003">
    <property type="entry name" value="Disintegrin and metalloproteinase domain-containing protein 17"/>
    <property type="match status" value="1"/>
</dbReference>
<dbReference type="Gene3D" id="3.40.1620.60">
    <property type="match status" value="1"/>
</dbReference>
<dbReference type="Gene3D" id="3.40.390.10">
    <property type="entry name" value="Collagenase (Catalytic Domain)"/>
    <property type="match status" value="1"/>
</dbReference>
<dbReference type="Gene3D" id="4.10.70.10">
    <property type="entry name" value="Disintegrin domain"/>
    <property type="match status" value="1"/>
</dbReference>
<dbReference type="InterPro" id="IPR006586">
    <property type="entry name" value="ADAM_Cys-rich"/>
</dbReference>
<dbReference type="InterPro" id="IPR001762">
    <property type="entry name" value="Disintegrin_dom"/>
</dbReference>
<dbReference type="InterPro" id="IPR036436">
    <property type="entry name" value="Disintegrin_dom_sf"/>
</dbReference>
<dbReference type="InterPro" id="IPR024079">
    <property type="entry name" value="MetalloPept_cat_dom_sf"/>
</dbReference>
<dbReference type="InterPro" id="IPR001590">
    <property type="entry name" value="Peptidase_M12B"/>
</dbReference>
<dbReference type="InterPro" id="IPR034028">
    <property type="entry name" value="ZnMc_ADAM_fungal"/>
</dbReference>
<dbReference type="PANTHER" id="PTHR11905">
    <property type="entry name" value="ADAM A DISINTEGRIN AND METALLOPROTEASE DOMAIN"/>
    <property type="match status" value="1"/>
</dbReference>
<dbReference type="PANTHER" id="PTHR11905:SF159">
    <property type="entry name" value="ADAM METALLOPROTEASE"/>
    <property type="match status" value="1"/>
</dbReference>
<dbReference type="Pfam" id="PF00200">
    <property type="entry name" value="Disintegrin"/>
    <property type="match status" value="1"/>
</dbReference>
<dbReference type="Pfam" id="PF13688">
    <property type="entry name" value="Reprolysin_5"/>
    <property type="match status" value="1"/>
</dbReference>
<dbReference type="PRINTS" id="PR00289">
    <property type="entry name" value="DISINTEGRIN"/>
</dbReference>
<dbReference type="SMART" id="SM00608">
    <property type="entry name" value="ACR"/>
    <property type="match status" value="1"/>
</dbReference>
<dbReference type="SMART" id="SM00050">
    <property type="entry name" value="DISIN"/>
    <property type="match status" value="1"/>
</dbReference>
<dbReference type="SUPFAM" id="SSF57552">
    <property type="entry name" value="Blood coagulation inhibitor (disintegrin)"/>
    <property type="match status" value="1"/>
</dbReference>
<dbReference type="SUPFAM" id="SSF55486">
    <property type="entry name" value="Metalloproteases ('zincins'), catalytic domain"/>
    <property type="match status" value="1"/>
</dbReference>
<dbReference type="PROSITE" id="PS50215">
    <property type="entry name" value="ADAM_MEPRO"/>
    <property type="match status" value="1"/>
</dbReference>
<dbReference type="PROSITE" id="PS50214">
    <property type="entry name" value="DISINTEGRIN_2"/>
    <property type="match status" value="1"/>
</dbReference>
<accession>C5FUK3</accession>
<name>ADMB_ARTOC</name>
<proteinExistence type="inferred from homology"/>
<gene>
    <name type="primary">ADM-B</name>
    <name type="ORF">MCYG_06406</name>
</gene>
<comment type="function">
    <text evidence="1">Probable zinc protease.</text>
</comment>
<comment type="cofactor">
    <cofactor evidence="1">
        <name>Zn(2+)</name>
        <dbReference type="ChEBI" id="CHEBI:29105"/>
    </cofactor>
    <text evidence="1">Binds 1 zinc ion per subunit.</text>
</comment>
<comment type="subcellular location">
    <subcellularLocation>
        <location>Membrane</location>
        <topology>Single-pass type I membrane protein</topology>
    </subcellularLocation>
</comment>
<organism>
    <name type="scientific">Arthroderma otae (strain ATCC MYA-4605 / CBS 113480)</name>
    <name type="common">Microsporum canis</name>
    <dbReference type="NCBI Taxonomy" id="554155"/>
    <lineage>
        <taxon>Eukaryota</taxon>
        <taxon>Fungi</taxon>
        <taxon>Dikarya</taxon>
        <taxon>Ascomycota</taxon>
        <taxon>Pezizomycotina</taxon>
        <taxon>Eurotiomycetes</taxon>
        <taxon>Eurotiomycetidae</taxon>
        <taxon>Onygenales</taxon>
        <taxon>Arthrodermataceae</taxon>
        <taxon>Microsporum</taxon>
    </lineage>
</organism>